<name>DRD4_MUSPF</name>
<sequence length="357" mass="37701">MGNRSAADADGLLAGRGPGTGGGAGSPGAAAALVGGVLLIGAVLAGNALVCVSVAAERALQTPTNYFIVSLAAADLLLALLVLPLFVYSEVQGGVWQFSPGLCDALMAMDVMLCTASIFNLCAISADRFVAVAVPLSYNRQSGGGRQLLLIGATWLLSAAVAAPVLCGLNDARGRDPAVCRLEDRDYVVYSSVCSFFLPCPVMLLLYWATFRGLRRWEAARRTKLHGRRPRRPSGPGPPPPEAVETPEAPEAIPTPDATLAEPALPASEERRAKITGRERKAMRVLPVVVGAFLVCWTPFFVVHITGALCPACAVPPRLVSAVTWLGYVNSALNPLIYTVFNAEFRAVFRKALRLCC</sequence>
<comment type="function">
    <text evidence="1 3">Dopamine receptor responsible for neuronal signaling in the mesolimbic system of the brain, an area of the brain that regulates emotion and complex behavior. Activated by dopamine, but also by epinephrine and norepinephrine, and by numerous synthetic agonists and drugs. Agonist binding triggers signaling via G proteins that inhibit adenylyl cyclase. Modulates the circadian rhythm of contrast sensitivity by regulating the rhythmic expression of NPAS2 in the retinal ganglion cells.</text>
</comment>
<comment type="subunit">
    <text evidence="1 2">Forms homo- and heterooligomers with DRD2. D4.7 allele exhibits higher affinity for homodimers compared to DRD2 heterodimers, while alleles D42. and 4.4 have similar affinities for both. The interaction with DRD2 may modulate agonist-induced downstream signaling (By similarity). Interacts with CLIC6 (By similarity). Interacts with GPRASP1. May interact with ADORA2A. Interacts with KLHL12 (By similarity).</text>
</comment>
<comment type="subcellular location">
    <subcellularLocation>
        <location evidence="1">Cell membrane</location>
        <topology evidence="1">Multi-pass membrane protein</topology>
    </subcellularLocation>
</comment>
<comment type="PTM">
    <text evidence="1">Polyubiquitinated by the BCR(KLHL12) E3 ubiquitin ligase complex: polyubiquitination does not lead to degradation of DRD4 protein.</text>
</comment>
<comment type="PTM">
    <text evidence="1">Palmitoylated. Palmitoylation of the C-terminal Cys is important for normal expression at the cell membrane.</text>
</comment>
<comment type="similarity">
    <text evidence="5">Belongs to the G-protein coupled receptor 1 family.</text>
</comment>
<gene>
    <name type="primary">DRD4</name>
</gene>
<accession>Q6TLJ0</accession>
<dbReference type="EMBL" id="AY394848">
    <property type="protein sequence ID" value="AAQ95734.1"/>
    <property type="molecule type" value="mRNA"/>
</dbReference>
<dbReference type="RefSeq" id="NP_001297096.1">
    <property type="nucleotide sequence ID" value="NM_001310167.1"/>
</dbReference>
<dbReference type="SMR" id="Q6TLJ0"/>
<dbReference type="GlyCosmos" id="Q6TLJ0">
    <property type="glycosylation" value="1 site, No reported glycans"/>
</dbReference>
<dbReference type="GeneID" id="106004514"/>
<dbReference type="CTD" id="1815"/>
<dbReference type="InParanoid" id="Q6TLJ0"/>
<dbReference type="OrthoDB" id="10010417at2759"/>
<dbReference type="Proteomes" id="UP000000715">
    <property type="component" value="Unplaced"/>
</dbReference>
<dbReference type="GO" id="GO:0005886">
    <property type="term" value="C:plasma membrane"/>
    <property type="evidence" value="ECO:0000250"/>
    <property type="project" value="UniProtKB"/>
</dbReference>
<dbReference type="GO" id="GO:0045202">
    <property type="term" value="C:synapse"/>
    <property type="evidence" value="ECO:0007669"/>
    <property type="project" value="GOC"/>
</dbReference>
<dbReference type="GO" id="GO:0035240">
    <property type="term" value="F:dopamine binding"/>
    <property type="evidence" value="ECO:0000250"/>
    <property type="project" value="UniProtKB"/>
</dbReference>
<dbReference type="GO" id="GO:0001591">
    <property type="term" value="F:dopamine neurotransmitter receptor activity, coupled via Gi/Go"/>
    <property type="evidence" value="ECO:0000250"/>
    <property type="project" value="UniProtKB"/>
</dbReference>
<dbReference type="GO" id="GO:0004930">
    <property type="term" value="F:G protein-coupled receptor activity"/>
    <property type="evidence" value="ECO:0007669"/>
    <property type="project" value="UniProtKB-KW"/>
</dbReference>
<dbReference type="GO" id="GO:0046872">
    <property type="term" value="F:metal ion binding"/>
    <property type="evidence" value="ECO:0007669"/>
    <property type="project" value="UniProtKB-KW"/>
</dbReference>
<dbReference type="GO" id="GO:0007195">
    <property type="term" value="P:adenylate cyclase-inhibiting dopamine receptor signaling pathway"/>
    <property type="evidence" value="ECO:0000250"/>
    <property type="project" value="UniProtKB"/>
</dbReference>
<dbReference type="GO" id="GO:0051481">
    <property type="term" value="P:negative regulation of cytosolic calcium ion concentration"/>
    <property type="evidence" value="ECO:0007669"/>
    <property type="project" value="TreeGrafter"/>
</dbReference>
<dbReference type="GO" id="GO:0051967">
    <property type="term" value="P:negative regulation of synaptic transmission, glutamatergic"/>
    <property type="evidence" value="ECO:0007669"/>
    <property type="project" value="TreeGrafter"/>
</dbReference>
<dbReference type="GO" id="GO:0060158">
    <property type="term" value="P:phospholipase C-activating dopamine receptor signaling pathway"/>
    <property type="evidence" value="ECO:0007669"/>
    <property type="project" value="TreeGrafter"/>
</dbReference>
<dbReference type="GO" id="GO:0042752">
    <property type="term" value="P:regulation of circadian rhythm"/>
    <property type="evidence" value="ECO:0000250"/>
    <property type="project" value="UniProtKB"/>
</dbReference>
<dbReference type="GO" id="GO:0014059">
    <property type="term" value="P:regulation of dopamine secretion"/>
    <property type="evidence" value="ECO:0007669"/>
    <property type="project" value="TreeGrafter"/>
</dbReference>
<dbReference type="GO" id="GO:0043266">
    <property type="term" value="P:regulation of potassium ion transport"/>
    <property type="evidence" value="ECO:0007669"/>
    <property type="project" value="TreeGrafter"/>
</dbReference>
<dbReference type="GO" id="GO:0048511">
    <property type="term" value="P:rhythmic process"/>
    <property type="evidence" value="ECO:0007669"/>
    <property type="project" value="UniProtKB-KW"/>
</dbReference>
<dbReference type="CDD" id="cd15308">
    <property type="entry name" value="7tmA_D4_dopamine_R"/>
    <property type="match status" value="1"/>
</dbReference>
<dbReference type="FunFam" id="1.20.1070.10:FF:000361">
    <property type="entry name" value="Dopamine receptor D4"/>
    <property type="match status" value="1"/>
</dbReference>
<dbReference type="Gene3D" id="1.20.1070.10">
    <property type="entry name" value="Rhodopsin 7-helix transmembrane proteins"/>
    <property type="match status" value="1"/>
</dbReference>
<dbReference type="InterPro" id="IPR002185">
    <property type="entry name" value="Dopamine_D4_rcpt"/>
</dbReference>
<dbReference type="InterPro" id="IPR000929">
    <property type="entry name" value="Dopamine_rcpt"/>
</dbReference>
<dbReference type="InterPro" id="IPR000276">
    <property type="entry name" value="GPCR_Rhodpsn"/>
</dbReference>
<dbReference type="InterPro" id="IPR017452">
    <property type="entry name" value="GPCR_Rhodpsn_7TM"/>
</dbReference>
<dbReference type="PANTHER" id="PTHR24248">
    <property type="entry name" value="ADRENERGIC RECEPTOR-RELATED G-PROTEIN COUPLED RECEPTOR"/>
    <property type="match status" value="1"/>
</dbReference>
<dbReference type="PANTHER" id="PTHR24248:SF143">
    <property type="entry name" value="D(4) DOPAMINE RECEPTOR"/>
    <property type="match status" value="1"/>
</dbReference>
<dbReference type="Pfam" id="PF00001">
    <property type="entry name" value="7tm_1"/>
    <property type="match status" value="1"/>
</dbReference>
<dbReference type="PRINTS" id="PR00569">
    <property type="entry name" value="DOPAMINED4R"/>
</dbReference>
<dbReference type="PRINTS" id="PR00242">
    <property type="entry name" value="DOPAMINER"/>
</dbReference>
<dbReference type="PRINTS" id="PR00237">
    <property type="entry name" value="GPCRRHODOPSN"/>
</dbReference>
<dbReference type="SMART" id="SM01381">
    <property type="entry name" value="7TM_GPCR_Srsx"/>
    <property type="match status" value="1"/>
</dbReference>
<dbReference type="SUPFAM" id="SSF81321">
    <property type="entry name" value="Family A G protein-coupled receptor-like"/>
    <property type="match status" value="1"/>
</dbReference>
<dbReference type="PROSITE" id="PS00237">
    <property type="entry name" value="G_PROTEIN_RECEP_F1_1"/>
    <property type="match status" value="1"/>
</dbReference>
<dbReference type="PROSITE" id="PS50262">
    <property type="entry name" value="G_PROTEIN_RECEP_F1_2"/>
    <property type="match status" value="1"/>
</dbReference>
<evidence type="ECO:0000250" key="1">
    <source>
        <dbReference type="UniProtKB" id="P21917"/>
    </source>
</evidence>
<evidence type="ECO:0000250" key="2">
    <source>
        <dbReference type="UniProtKB" id="P30729"/>
    </source>
</evidence>
<evidence type="ECO:0000250" key="3">
    <source>
        <dbReference type="UniProtKB" id="P51436"/>
    </source>
</evidence>
<evidence type="ECO:0000255" key="4"/>
<evidence type="ECO:0000255" key="5">
    <source>
        <dbReference type="PROSITE-ProRule" id="PRU00521"/>
    </source>
</evidence>
<evidence type="ECO:0000256" key="6">
    <source>
        <dbReference type="SAM" id="MobiDB-lite"/>
    </source>
</evidence>
<reference key="1">
    <citation type="submission" date="2003-09" db="EMBL/GenBank/DDBJ databases">
        <title>Cloning and functional expression of ferret dopamine D2 and D4 receptors.</title>
        <authorList>
            <person name="Gubbins E.J."/>
            <person name="Masters J."/>
            <person name="Moreland R.B."/>
        </authorList>
    </citation>
    <scope>NUCLEOTIDE SEQUENCE [MRNA]</scope>
</reference>
<proteinExistence type="evidence at transcript level"/>
<keyword id="KW-0090">Biological rhythms</keyword>
<keyword id="KW-1003">Cell membrane</keyword>
<keyword id="KW-1015">Disulfide bond</keyword>
<keyword id="KW-0297">G-protein coupled receptor</keyword>
<keyword id="KW-0325">Glycoprotein</keyword>
<keyword id="KW-0449">Lipoprotein</keyword>
<keyword id="KW-0472">Membrane</keyword>
<keyword id="KW-0479">Metal-binding</keyword>
<keyword id="KW-0564">Palmitate</keyword>
<keyword id="KW-0675">Receptor</keyword>
<keyword id="KW-1185">Reference proteome</keyword>
<keyword id="KW-0915">Sodium</keyword>
<keyword id="KW-0807">Transducer</keyword>
<keyword id="KW-0812">Transmembrane</keyword>
<keyword id="KW-1133">Transmembrane helix</keyword>
<keyword id="KW-0832">Ubl conjugation</keyword>
<organism>
    <name type="scientific">Mustela putorius furo</name>
    <name type="common">European domestic ferret</name>
    <name type="synonym">Mustela furo</name>
    <dbReference type="NCBI Taxonomy" id="9669"/>
    <lineage>
        <taxon>Eukaryota</taxon>
        <taxon>Metazoa</taxon>
        <taxon>Chordata</taxon>
        <taxon>Craniata</taxon>
        <taxon>Vertebrata</taxon>
        <taxon>Euteleostomi</taxon>
        <taxon>Mammalia</taxon>
        <taxon>Eutheria</taxon>
        <taxon>Laurasiatheria</taxon>
        <taxon>Carnivora</taxon>
        <taxon>Caniformia</taxon>
        <taxon>Musteloidea</taxon>
        <taxon>Mustelidae</taxon>
        <taxon>Mustelinae</taxon>
        <taxon>Mustela</taxon>
    </lineage>
</organism>
<protein>
    <recommendedName>
        <fullName>D(4) dopamine receptor</fullName>
    </recommendedName>
    <alternativeName>
        <fullName>Dopamine D4 receptor</fullName>
    </alternativeName>
</protein>
<feature type="chain" id="PRO_0000232451" description="D(4) dopamine receptor">
    <location>
        <begin position="1"/>
        <end position="357"/>
    </location>
</feature>
<feature type="topological domain" description="Extracellular" evidence="1">
    <location>
        <begin position="1"/>
        <end position="32"/>
    </location>
</feature>
<feature type="transmembrane region" description="Helical; Name=1" evidence="1">
    <location>
        <begin position="33"/>
        <end position="55"/>
    </location>
</feature>
<feature type="topological domain" description="Cytoplasmic" evidence="1">
    <location>
        <begin position="56"/>
        <end position="65"/>
    </location>
</feature>
<feature type="transmembrane region" description="Helical; Name=2" evidence="1">
    <location>
        <begin position="66"/>
        <end position="88"/>
    </location>
</feature>
<feature type="topological domain" description="Extracellular" evidence="1">
    <location>
        <begin position="89"/>
        <end position="104"/>
    </location>
</feature>
<feature type="transmembrane region" description="Helical; Name=3" evidence="1">
    <location>
        <begin position="105"/>
        <end position="126"/>
    </location>
</feature>
<feature type="topological domain" description="Cytoplasmic" evidence="1">
    <location>
        <begin position="127"/>
        <end position="146"/>
    </location>
</feature>
<feature type="transmembrane region" description="Helical; Name=4" evidence="1">
    <location>
        <begin position="147"/>
        <end position="170"/>
    </location>
</feature>
<feature type="topological domain" description="Extracellular" evidence="1">
    <location>
        <begin position="171"/>
        <end position="186"/>
    </location>
</feature>
<feature type="transmembrane region" description="Helical; Name=5" evidence="1">
    <location>
        <begin position="187"/>
        <end position="208"/>
    </location>
</feature>
<feature type="topological domain" description="Cytoplasmic" evidence="1">
    <location>
        <begin position="209"/>
        <end position="284"/>
    </location>
</feature>
<feature type="transmembrane region" description="Helical; Name=6" evidence="1">
    <location>
        <begin position="285"/>
        <end position="307"/>
    </location>
</feature>
<feature type="topological domain" description="Extracellular" evidence="1">
    <location>
        <begin position="308"/>
        <end position="316"/>
    </location>
</feature>
<feature type="transmembrane region" description="Helical; Name=7" evidence="1">
    <location>
        <begin position="317"/>
        <end position="339"/>
    </location>
</feature>
<feature type="topological domain" description="Cytoplasmic" evidence="1">
    <location>
        <begin position="340"/>
        <end position="357"/>
    </location>
</feature>
<feature type="region of interest" description="Disordered" evidence="6">
    <location>
        <begin position="225"/>
        <end position="261"/>
    </location>
</feature>
<feature type="compositionally biased region" description="Pro residues" evidence="6">
    <location>
        <begin position="233"/>
        <end position="242"/>
    </location>
</feature>
<feature type="compositionally biased region" description="Low complexity" evidence="6">
    <location>
        <begin position="243"/>
        <end position="259"/>
    </location>
</feature>
<feature type="binding site" evidence="1">
    <location>
        <position position="75"/>
    </location>
    <ligand>
        <name>Na(+)</name>
        <dbReference type="ChEBI" id="CHEBI:29101"/>
    </ligand>
</feature>
<feature type="binding site" evidence="1">
    <location>
        <position position="117"/>
    </location>
    <ligand>
        <name>Na(+)</name>
        <dbReference type="ChEBI" id="CHEBI:29101"/>
    </ligand>
</feature>
<feature type="lipid moiety-binding region" description="S-palmitoyl cysteine" evidence="1">
    <location>
        <position position="357"/>
    </location>
</feature>
<feature type="glycosylation site" description="N-linked (GlcNAc...) asparagine" evidence="4">
    <location>
        <position position="3"/>
    </location>
</feature>
<feature type="disulfide bond" evidence="5">
    <location>
        <begin position="103"/>
        <end position="180"/>
    </location>
</feature>
<feature type="disulfide bond" evidence="1">
    <location>
        <begin position="310"/>
        <end position="313"/>
    </location>
</feature>